<organism>
    <name type="scientific">Legionella pneumophila subsp. pneumophila (strain Philadelphia 1 / ATCC 33152 / DSM 7513)</name>
    <dbReference type="NCBI Taxonomy" id="272624"/>
    <lineage>
        <taxon>Bacteria</taxon>
        <taxon>Pseudomonadati</taxon>
        <taxon>Pseudomonadota</taxon>
        <taxon>Gammaproteobacteria</taxon>
        <taxon>Legionellales</taxon>
        <taxon>Legionellaceae</taxon>
        <taxon>Legionella</taxon>
    </lineage>
</organism>
<feature type="chain" id="PRO_0000237057" description="Small ribosomal subunit protein uS10">
    <location>
        <begin position="1"/>
        <end position="105"/>
    </location>
</feature>
<protein>
    <recommendedName>
        <fullName evidence="1">Small ribosomal subunit protein uS10</fullName>
    </recommendedName>
    <alternativeName>
        <fullName evidence="2">30S ribosomal protein S10</fullName>
    </alternativeName>
</protein>
<proteinExistence type="inferred from homology"/>
<dbReference type="EMBL" id="AE017354">
    <property type="protein sequence ID" value="AAU26425.1"/>
    <property type="molecule type" value="Genomic_DNA"/>
</dbReference>
<dbReference type="RefSeq" id="WP_010946077.1">
    <property type="nucleotide sequence ID" value="NC_002942.5"/>
</dbReference>
<dbReference type="RefSeq" id="YP_094372.1">
    <property type="nucleotide sequence ID" value="NC_002942.5"/>
</dbReference>
<dbReference type="SMR" id="Q5ZYP4"/>
<dbReference type="STRING" id="272624.lpg0328"/>
<dbReference type="PaxDb" id="272624-lpg0328"/>
<dbReference type="GeneID" id="57034331"/>
<dbReference type="KEGG" id="lpn:lpg0328"/>
<dbReference type="PATRIC" id="fig|272624.6.peg.335"/>
<dbReference type="eggNOG" id="COG0051">
    <property type="taxonomic scope" value="Bacteria"/>
</dbReference>
<dbReference type="HOGENOM" id="CLU_122625_1_3_6"/>
<dbReference type="OrthoDB" id="9804464at2"/>
<dbReference type="Proteomes" id="UP000000609">
    <property type="component" value="Chromosome"/>
</dbReference>
<dbReference type="GO" id="GO:1990904">
    <property type="term" value="C:ribonucleoprotein complex"/>
    <property type="evidence" value="ECO:0007669"/>
    <property type="project" value="UniProtKB-KW"/>
</dbReference>
<dbReference type="GO" id="GO:0005840">
    <property type="term" value="C:ribosome"/>
    <property type="evidence" value="ECO:0007669"/>
    <property type="project" value="UniProtKB-KW"/>
</dbReference>
<dbReference type="GO" id="GO:0003735">
    <property type="term" value="F:structural constituent of ribosome"/>
    <property type="evidence" value="ECO:0007669"/>
    <property type="project" value="InterPro"/>
</dbReference>
<dbReference type="GO" id="GO:0000049">
    <property type="term" value="F:tRNA binding"/>
    <property type="evidence" value="ECO:0007669"/>
    <property type="project" value="UniProtKB-UniRule"/>
</dbReference>
<dbReference type="GO" id="GO:0006412">
    <property type="term" value="P:translation"/>
    <property type="evidence" value="ECO:0007669"/>
    <property type="project" value="UniProtKB-UniRule"/>
</dbReference>
<dbReference type="FunFam" id="3.30.70.600:FF:000001">
    <property type="entry name" value="30S ribosomal protein S10"/>
    <property type="match status" value="1"/>
</dbReference>
<dbReference type="Gene3D" id="3.30.70.600">
    <property type="entry name" value="Ribosomal protein S10 domain"/>
    <property type="match status" value="1"/>
</dbReference>
<dbReference type="HAMAP" id="MF_00508">
    <property type="entry name" value="Ribosomal_uS10"/>
    <property type="match status" value="1"/>
</dbReference>
<dbReference type="InterPro" id="IPR001848">
    <property type="entry name" value="Ribosomal_uS10"/>
</dbReference>
<dbReference type="InterPro" id="IPR027486">
    <property type="entry name" value="Ribosomal_uS10_dom"/>
</dbReference>
<dbReference type="InterPro" id="IPR036838">
    <property type="entry name" value="Ribosomal_uS10_dom_sf"/>
</dbReference>
<dbReference type="NCBIfam" id="NF001861">
    <property type="entry name" value="PRK00596.1"/>
    <property type="match status" value="1"/>
</dbReference>
<dbReference type="NCBIfam" id="TIGR01049">
    <property type="entry name" value="rpsJ_bact"/>
    <property type="match status" value="1"/>
</dbReference>
<dbReference type="PANTHER" id="PTHR11700">
    <property type="entry name" value="30S RIBOSOMAL PROTEIN S10 FAMILY MEMBER"/>
    <property type="match status" value="1"/>
</dbReference>
<dbReference type="Pfam" id="PF00338">
    <property type="entry name" value="Ribosomal_S10"/>
    <property type="match status" value="1"/>
</dbReference>
<dbReference type="PRINTS" id="PR00971">
    <property type="entry name" value="RIBOSOMALS10"/>
</dbReference>
<dbReference type="SMART" id="SM01403">
    <property type="entry name" value="Ribosomal_S10"/>
    <property type="match status" value="1"/>
</dbReference>
<dbReference type="SUPFAM" id="SSF54999">
    <property type="entry name" value="Ribosomal protein S10"/>
    <property type="match status" value="1"/>
</dbReference>
<name>RS10_LEGPH</name>
<accession>Q5ZYP4</accession>
<keyword id="KW-1185">Reference proteome</keyword>
<keyword id="KW-0687">Ribonucleoprotein</keyword>
<keyword id="KW-0689">Ribosomal protein</keyword>
<sequence>MSSNQNIKIRLKSFDHRLIDLSTREIVDTAKRTGAQIRGPIPLPIRKEKFTVLTSPHVNKDARDQYELRTHKRLVVIVHPTEKTVDALMKLDLAAGVDVQISLDD</sequence>
<comment type="function">
    <text evidence="1">Involved in the binding of tRNA to the ribosomes.</text>
</comment>
<comment type="subunit">
    <text evidence="1">Part of the 30S ribosomal subunit.</text>
</comment>
<comment type="similarity">
    <text evidence="1">Belongs to the universal ribosomal protein uS10 family.</text>
</comment>
<evidence type="ECO:0000255" key="1">
    <source>
        <dbReference type="HAMAP-Rule" id="MF_00508"/>
    </source>
</evidence>
<evidence type="ECO:0000305" key="2"/>
<reference key="1">
    <citation type="journal article" date="2004" name="Science">
        <title>The genomic sequence of the accidental pathogen Legionella pneumophila.</title>
        <authorList>
            <person name="Chien M."/>
            <person name="Morozova I."/>
            <person name="Shi S."/>
            <person name="Sheng H."/>
            <person name="Chen J."/>
            <person name="Gomez S.M."/>
            <person name="Asamani G."/>
            <person name="Hill K."/>
            <person name="Nuara J."/>
            <person name="Feder M."/>
            <person name="Rineer J."/>
            <person name="Greenberg J.J."/>
            <person name="Steshenko V."/>
            <person name="Park S.H."/>
            <person name="Zhao B."/>
            <person name="Teplitskaya E."/>
            <person name="Edwards J.R."/>
            <person name="Pampou S."/>
            <person name="Georghiou A."/>
            <person name="Chou I.-C."/>
            <person name="Iannuccilli W."/>
            <person name="Ulz M.E."/>
            <person name="Kim D.H."/>
            <person name="Geringer-Sameth A."/>
            <person name="Goldsberry C."/>
            <person name="Morozov P."/>
            <person name="Fischer S.G."/>
            <person name="Segal G."/>
            <person name="Qu X."/>
            <person name="Rzhetsky A."/>
            <person name="Zhang P."/>
            <person name="Cayanis E."/>
            <person name="De Jong P.J."/>
            <person name="Ju J."/>
            <person name="Kalachikov S."/>
            <person name="Shuman H.A."/>
            <person name="Russo J.J."/>
        </authorList>
    </citation>
    <scope>NUCLEOTIDE SEQUENCE [LARGE SCALE GENOMIC DNA]</scope>
    <source>
        <strain>Philadelphia 1 / ATCC 33152 / DSM 7513</strain>
    </source>
</reference>
<gene>
    <name evidence="1" type="primary">rpsJ</name>
    <name type="ordered locus">lpg0328</name>
</gene>